<gene>
    <name evidence="1" type="primary">rplE</name>
    <name type="ordered locus">Exig_0108</name>
</gene>
<keyword id="KW-1185">Reference proteome</keyword>
<keyword id="KW-0687">Ribonucleoprotein</keyword>
<keyword id="KW-0689">Ribosomal protein</keyword>
<keyword id="KW-0694">RNA-binding</keyword>
<keyword id="KW-0699">rRNA-binding</keyword>
<keyword id="KW-0820">tRNA-binding</keyword>
<sequence>MNRLKAKYQDEIVKVMMEKFNYTSVMQAPKVDKIVINMGVGDAVTNTKALDMAVEELQLLTGQKPLITKAKKSIAGFKLREGMPIGAKVTLRGERMYEFLDKLINVSLPRVRDFRGVSKKSFDGRGNYTLGVKEQLIFPEIDYDRVSKVRGMDIVIVTTANTDEESRELLTALGMPFQK</sequence>
<comment type="function">
    <text evidence="1">This is one of the proteins that bind and probably mediate the attachment of the 5S RNA into the large ribosomal subunit, where it forms part of the central protuberance. In the 70S ribosome it contacts protein S13 of the 30S subunit (bridge B1b), connecting the 2 subunits; this bridge is implicated in subunit movement. Contacts the P site tRNA; the 5S rRNA and some of its associated proteins might help stabilize positioning of ribosome-bound tRNAs.</text>
</comment>
<comment type="subunit">
    <text evidence="1">Part of the 50S ribosomal subunit; part of the 5S rRNA/L5/L18/L25 subcomplex. Contacts the 5S rRNA and the P site tRNA. Forms a bridge to the 30S subunit in the 70S ribosome.</text>
</comment>
<comment type="similarity">
    <text evidence="1">Belongs to the universal ribosomal protein uL5 family.</text>
</comment>
<feature type="chain" id="PRO_1000214629" description="Large ribosomal subunit protein uL5">
    <location>
        <begin position="1"/>
        <end position="179"/>
    </location>
</feature>
<protein>
    <recommendedName>
        <fullName evidence="1">Large ribosomal subunit protein uL5</fullName>
    </recommendedName>
    <alternativeName>
        <fullName evidence="2">50S ribosomal protein L5</fullName>
    </alternativeName>
</protein>
<proteinExistence type="inferred from homology"/>
<organism>
    <name type="scientific">Exiguobacterium sibiricum (strain DSM 17290 / CCUG 55495 / CIP 109462 / JCM 13490 / 255-15)</name>
    <dbReference type="NCBI Taxonomy" id="262543"/>
    <lineage>
        <taxon>Bacteria</taxon>
        <taxon>Bacillati</taxon>
        <taxon>Bacillota</taxon>
        <taxon>Bacilli</taxon>
        <taxon>Bacillales</taxon>
        <taxon>Bacillales Family XII. Incertae Sedis</taxon>
        <taxon>Exiguobacterium</taxon>
    </lineage>
</organism>
<reference key="1">
    <citation type="submission" date="2008-04" db="EMBL/GenBank/DDBJ databases">
        <title>Complete sequence of chromosome of Exiguobacterium sibiricum 255-15.</title>
        <authorList>
            <consortium name="US DOE Joint Genome Institute"/>
            <person name="Copeland A."/>
            <person name="Lucas S."/>
            <person name="Lapidus A."/>
            <person name="Glavina del Rio T."/>
            <person name="Dalin E."/>
            <person name="Tice H."/>
            <person name="Bruce D."/>
            <person name="Goodwin L."/>
            <person name="Pitluck S."/>
            <person name="Kiss H."/>
            <person name="Chertkov O."/>
            <person name="Monk C."/>
            <person name="Brettin T."/>
            <person name="Detter J.C."/>
            <person name="Han C."/>
            <person name="Kuske C.R."/>
            <person name="Schmutz J."/>
            <person name="Larimer F."/>
            <person name="Land M."/>
            <person name="Hauser L."/>
            <person name="Kyrpides N."/>
            <person name="Mikhailova N."/>
            <person name="Vishnivetskaya T."/>
            <person name="Rodrigues D.F."/>
            <person name="Gilichinsky D."/>
            <person name="Tiedje J."/>
            <person name="Richardson P."/>
        </authorList>
    </citation>
    <scope>NUCLEOTIDE SEQUENCE [LARGE SCALE GENOMIC DNA]</scope>
    <source>
        <strain>DSM 17290 / CCUG 55495 / CIP 109462 / JCM 13490 / 255-15</strain>
    </source>
</reference>
<dbReference type="EMBL" id="CP001022">
    <property type="protein sequence ID" value="ACB59595.1"/>
    <property type="molecule type" value="Genomic_DNA"/>
</dbReference>
<dbReference type="RefSeq" id="WP_012369021.1">
    <property type="nucleotide sequence ID" value="NC_010556.1"/>
</dbReference>
<dbReference type="SMR" id="B1YGW2"/>
<dbReference type="STRING" id="262543.Exig_0108"/>
<dbReference type="KEGG" id="esi:Exig_0108"/>
<dbReference type="eggNOG" id="COG0094">
    <property type="taxonomic scope" value="Bacteria"/>
</dbReference>
<dbReference type="HOGENOM" id="CLU_061015_2_1_9"/>
<dbReference type="OrthoDB" id="9806626at2"/>
<dbReference type="Proteomes" id="UP000001681">
    <property type="component" value="Chromosome"/>
</dbReference>
<dbReference type="GO" id="GO:1990904">
    <property type="term" value="C:ribonucleoprotein complex"/>
    <property type="evidence" value="ECO:0007669"/>
    <property type="project" value="UniProtKB-KW"/>
</dbReference>
<dbReference type="GO" id="GO:0005840">
    <property type="term" value="C:ribosome"/>
    <property type="evidence" value="ECO:0007669"/>
    <property type="project" value="UniProtKB-KW"/>
</dbReference>
<dbReference type="GO" id="GO:0019843">
    <property type="term" value="F:rRNA binding"/>
    <property type="evidence" value="ECO:0007669"/>
    <property type="project" value="UniProtKB-UniRule"/>
</dbReference>
<dbReference type="GO" id="GO:0003735">
    <property type="term" value="F:structural constituent of ribosome"/>
    <property type="evidence" value="ECO:0007669"/>
    <property type="project" value="InterPro"/>
</dbReference>
<dbReference type="GO" id="GO:0000049">
    <property type="term" value="F:tRNA binding"/>
    <property type="evidence" value="ECO:0007669"/>
    <property type="project" value="UniProtKB-UniRule"/>
</dbReference>
<dbReference type="GO" id="GO:0006412">
    <property type="term" value="P:translation"/>
    <property type="evidence" value="ECO:0007669"/>
    <property type="project" value="UniProtKB-UniRule"/>
</dbReference>
<dbReference type="FunFam" id="3.30.1440.10:FF:000001">
    <property type="entry name" value="50S ribosomal protein L5"/>
    <property type="match status" value="1"/>
</dbReference>
<dbReference type="Gene3D" id="3.30.1440.10">
    <property type="match status" value="1"/>
</dbReference>
<dbReference type="HAMAP" id="MF_01333_B">
    <property type="entry name" value="Ribosomal_uL5_B"/>
    <property type="match status" value="1"/>
</dbReference>
<dbReference type="InterPro" id="IPR002132">
    <property type="entry name" value="Ribosomal_uL5"/>
</dbReference>
<dbReference type="InterPro" id="IPR020930">
    <property type="entry name" value="Ribosomal_uL5_bac-type"/>
</dbReference>
<dbReference type="InterPro" id="IPR031309">
    <property type="entry name" value="Ribosomal_uL5_C"/>
</dbReference>
<dbReference type="InterPro" id="IPR020929">
    <property type="entry name" value="Ribosomal_uL5_CS"/>
</dbReference>
<dbReference type="InterPro" id="IPR022803">
    <property type="entry name" value="Ribosomal_uL5_dom_sf"/>
</dbReference>
<dbReference type="InterPro" id="IPR031310">
    <property type="entry name" value="Ribosomal_uL5_N"/>
</dbReference>
<dbReference type="NCBIfam" id="NF000585">
    <property type="entry name" value="PRK00010.1"/>
    <property type="match status" value="1"/>
</dbReference>
<dbReference type="PANTHER" id="PTHR11994">
    <property type="entry name" value="60S RIBOSOMAL PROTEIN L11-RELATED"/>
    <property type="match status" value="1"/>
</dbReference>
<dbReference type="Pfam" id="PF00281">
    <property type="entry name" value="Ribosomal_L5"/>
    <property type="match status" value="1"/>
</dbReference>
<dbReference type="Pfam" id="PF00673">
    <property type="entry name" value="Ribosomal_L5_C"/>
    <property type="match status" value="1"/>
</dbReference>
<dbReference type="PIRSF" id="PIRSF002161">
    <property type="entry name" value="Ribosomal_L5"/>
    <property type="match status" value="1"/>
</dbReference>
<dbReference type="SUPFAM" id="SSF55282">
    <property type="entry name" value="RL5-like"/>
    <property type="match status" value="1"/>
</dbReference>
<dbReference type="PROSITE" id="PS00358">
    <property type="entry name" value="RIBOSOMAL_L5"/>
    <property type="match status" value="1"/>
</dbReference>
<name>RL5_EXIS2</name>
<accession>B1YGW2</accession>
<evidence type="ECO:0000255" key="1">
    <source>
        <dbReference type="HAMAP-Rule" id="MF_01333"/>
    </source>
</evidence>
<evidence type="ECO:0000305" key="2"/>